<gene>
    <name type="primary">RNF175</name>
</gene>
<protein>
    <recommendedName>
        <fullName>RING finger protein 175</fullName>
    </recommendedName>
</protein>
<comment type="interaction">
    <interactant intactId="EBI-10265447">
        <id>Q8N4F7</id>
    </interactant>
    <interactant intactId="EBI-10172290">
        <id>P60409</id>
        <label>KRTAP10-7</label>
    </interactant>
    <organismsDiffer>false</organismsDiffer>
    <experiments>3</experiments>
</comment>
<comment type="subcellular location">
    <subcellularLocation>
        <location evidence="5">Membrane</location>
        <topology evidence="5">Multi-pass membrane protein</topology>
    </subcellularLocation>
</comment>
<comment type="alternative products">
    <event type="alternative splicing"/>
    <isoform>
        <id>Q8N4F7-1</id>
        <name>1</name>
        <sequence type="displayed"/>
    </isoform>
    <isoform>
        <id>Q8N4F7-2</id>
        <name>2</name>
        <sequence type="described" ref="VSP_055433 VSP_055434 VSP_055435 VSP_055436"/>
    </isoform>
</comment>
<evidence type="ECO:0000255" key="1"/>
<evidence type="ECO:0000255" key="2">
    <source>
        <dbReference type="PROSITE-ProRule" id="PRU00175"/>
    </source>
</evidence>
<evidence type="ECO:0000269" key="3">
    <source>
    </source>
</evidence>
<evidence type="ECO:0000303" key="4">
    <source>
    </source>
</evidence>
<evidence type="ECO:0000305" key="5"/>
<feature type="chain" id="PRO_0000245599" description="RING finger protein 175">
    <location>
        <begin position="1"/>
        <end position="328"/>
    </location>
</feature>
<feature type="transmembrane region" description="Helical" evidence="1">
    <location>
        <begin position="51"/>
        <end position="71"/>
    </location>
</feature>
<feature type="transmembrane region" description="Helical" evidence="1">
    <location>
        <begin position="83"/>
        <end position="103"/>
    </location>
</feature>
<feature type="transmembrane region" description="Helical" evidence="1">
    <location>
        <begin position="104"/>
        <end position="121"/>
    </location>
</feature>
<feature type="transmembrane region" description="Helical" evidence="1">
    <location>
        <begin position="149"/>
        <end position="169"/>
    </location>
</feature>
<feature type="transmembrane region" description="Helical" evidence="1">
    <location>
        <begin position="180"/>
        <end position="200"/>
    </location>
</feature>
<feature type="zinc finger region" description="RING-type; atypical" evidence="2">
    <location>
        <begin position="227"/>
        <end position="277"/>
    </location>
</feature>
<feature type="splice variant" id="VSP_055433" description="In isoform 2." evidence="4">
    <original>MAAGTA</original>
    <variation>MADPTI</variation>
    <location>
        <begin position="1"/>
        <end position="6"/>
    </location>
</feature>
<feature type="splice variant" id="VSP_055434" description="In isoform 2." evidence="4">
    <location>
        <begin position="7"/>
        <end position="134"/>
    </location>
</feature>
<feature type="splice variant" id="VSP_055435" description="In isoform 2." evidence="4">
    <original>FHEFCIRGWCIVGKKQTCPYCKEKVDLKRMISNPWERTHFLYGQILDWLRYLVA</original>
    <variation>YPFQRKLFGLHQASFFPPSPPPPPVPISSILLTFHAQTPVLYPPAQSSLPVCPC</variation>
    <location>
        <begin position="256"/>
        <end position="309"/>
    </location>
</feature>
<feature type="splice variant" id="VSP_055436" description="In isoform 2." evidence="4">
    <location>
        <begin position="310"/>
        <end position="328"/>
    </location>
</feature>
<feature type="sequence variant" id="VAR_026998" description="In dbSNP:rs10517577.">
    <original>M</original>
    <variation>V</variation>
    <location>
        <position position="159"/>
    </location>
</feature>
<feature type="sequence variant" id="VAR_026999" description="In dbSNP:rs1337.">
    <original>L</original>
    <variation>F</variation>
    <location>
        <position position="307"/>
    </location>
</feature>
<feature type="sequence variant" id="VAR_027000" description="In dbSNP:rs1339.">
    <original>I</original>
    <variation>M</variation>
    <location>
        <position position="315"/>
    </location>
</feature>
<feature type="sequence variant" id="VAR_027001" description="In dbSNP:rs2405432." evidence="3">
    <original>I</original>
    <variation>N</variation>
    <location>
        <position position="322"/>
    </location>
</feature>
<keyword id="KW-0025">Alternative splicing</keyword>
<keyword id="KW-0472">Membrane</keyword>
<keyword id="KW-0479">Metal-binding</keyword>
<keyword id="KW-1185">Reference proteome</keyword>
<keyword id="KW-0812">Transmembrane</keyword>
<keyword id="KW-1133">Transmembrane helix</keyword>
<keyword id="KW-0862">Zinc</keyword>
<keyword id="KW-0863">Zinc-finger</keyword>
<dbReference type="EMBL" id="AK091509">
    <property type="protein sequence ID" value="BAC03680.1"/>
    <property type="molecule type" value="mRNA"/>
</dbReference>
<dbReference type="EMBL" id="AC020703">
    <property type="status" value="NOT_ANNOTATED_CDS"/>
    <property type="molecule type" value="Genomic_DNA"/>
</dbReference>
<dbReference type="EMBL" id="AC106865">
    <property type="status" value="NOT_ANNOTATED_CDS"/>
    <property type="molecule type" value="Genomic_DNA"/>
</dbReference>
<dbReference type="EMBL" id="CH471056">
    <property type="protein sequence ID" value="EAX04951.1"/>
    <property type="molecule type" value="Genomic_DNA"/>
</dbReference>
<dbReference type="EMBL" id="BC034385">
    <property type="protein sequence ID" value="AAH34385.1"/>
    <property type="molecule type" value="mRNA"/>
</dbReference>
<dbReference type="CCDS" id="CCDS47149.1">
    <molecule id="Q8N4F7-1"/>
</dbReference>
<dbReference type="RefSeq" id="NP_775933.2">
    <molecule id="Q8N4F7-1"/>
    <property type="nucleotide sequence ID" value="NM_173662.4"/>
</dbReference>
<dbReference type="BioGRID" id="130136">
    <property type="interactions" value="5"/>
</dbReference>
<dbReference type="FunCoup" id="Q8N4F7">
    <property type="interactions" value="338"/>
</dbReference>
<dbReference type="IntAct" id="Q8N4F7">
    <property type="interactions" value="3"/>
</dbReference>
<dbReference type="STRING" id="9606.ENSP00000340979"/>
<dbReference type="GlyCosmos" id="Q8N4F7">
    <property type="glycosylation" value="1 site, 1 glycan"/>
</dbReference>
<dbReference type="GlyGen" id="Q8N4F7">
    <property type="glycosylation" value="1 site, 1 O-linked glycan (1 site)"/>
</dbReference>
<dbReference type="iPTMnet" id="Q8N4F7"/>
<dbReference type="PhosphoSitePlus" id="Q8N4F7"/>
<dbReference type="BioMuta" id="RNF175"/>
<dbReference type="DMDM" id="296452878"/>
<dbReference type="jPOST" id="Q8N4F7"/>
<dbReference type="MassIVE" id="Q8N4F7"/>
<dbReference type="PaxDb" id="9606-ENSP00000340979"/>
<dbReference type="PeptideAtlas" id="Q8N4F7"/>
<dbReference type="Antibodypedia" id="27903">
    <property type="antibodies" value="81 antibodies from 16 providers"/>
</dbReference>
<dbReference type="DNASU" id="285533"/>
<dbReference type="Ensembl" id="ENST00000347063.9">
    <molecule id="Q8N4F7-1"/>
    <property type="protein sequence ID" value="ENSP00000340979.4"/>
    <property type="gene ID" value="ENSG00000145428.15"/>
</dbReference>
<dbReference type="GeneID" id="285533"/>
<dbReference type="KEGG" id="hsa:285533"/>
<dbReference type="MANE-Select" id="ENST00000347063.9">
    <property type="protein sequence ID" value="ENSP00000340979.4"/>
    <property type="RefSeq nucleotide sequence ID" value="NM_173662.4"/>
    <property type="RefSeq protein sequence ID" value="NP_775933.2"/>
</dbReference>
<dbReference type="UCSC" id="uc003int.4">
    <molecule id="Q8N4F7-1"/>
    <property type="organism name" value="human"/>
</dbReference>
<dbReference type="AGR" id="HGNC:27735"/>
<dbReference type="CTD" id="285533"/>
<dbReference type="DisGeNET" id="285533"/>
<dbReference type="GeneCards" id="RNF175"/>
<dbReference type="HGNC" id="HGNC:27735">
    <property type="gene designation" value="RNF175"/>
</dbReference>
<dbReference type="HPA" id="ENSG00000145428">
    <property type="expression patterns" value="Tissue enhanced (brain)"/>
</dbReference>
<dbReference type="neXtProt" id="NX_Q8N4F7"/>
<dbReference type="OpenTargets" id="ENSG00000145428"/>
<dbReference type="PharmGKB" id="PA134909663"/>
<dbReference type="VEuPathDB" id="HostDB:ENSG00000145428"/>
<dbReference type="eggNOG" id="KOG1734">
    <property type="taxonomic scope" value="Eukaryota"/>
</dbReference>
<dbReference type="GeneTree" id="ENSGT00390000013075"/>
<dbReference type="HOGENOM" id="CLU_055016_1_0_1"/>
<dbReference type="InParanoid" id="Q8N4F7"/>
<dbReference type="OMA" id="PYWERTH"/>
<dbReference type="OrthoDB" id="446635at2759"/>
<dbReference type="PAN-GO" id="Q8N4F7">
    <property type="GO annotations" value="4 GO annotations based on evolutionary models"/>
</dbReference>
<dbReference type="PhylomeDB" id="Q8N4F7"/>
<dbReference type="TreeFam" id="TF314357"/>
<dbReference type="PathwayCommons" id="Q8N4F7"/>
<dbReference type="SignaLink" id="Q8N4F7"/>
<dbReference type="SIGNOR" id="Q8N4F7"/>
<dbReference type="BioGRID-ORCS" id="285533">
    <property type="hits" value="10 hits in 1186 CRISPR screens"/>
</dbReference>
<dbReference type="ChiTaRS" id="RNF175">
    <property type="organism name" value="human"/>
</dbReference>
<dbReference type="GenomeRNAi" id="285533"/>
<dbReference type="Pharos" id="Q8N4F7">
    <property type="development level" value="Tdark"/>
</dbReference>
<dbReference type="PRO" id="PR:Q8N4F7"/>
<dbReference type="Proteomes" id="UP000005640">
    <property type="component" value="Chromosome 4"/>
</dbReference>
<dbReference type="RNAct" id="Q8N4F7">
    <property type="molecule type" value="protein"/>
</dbReference>
<dbReference type="Bgee" id="ENSG00000145428">
    <property type="expression patterns" value="Expressed in middle temporal gyrus and 138 other cell types or tissues"/>
</dbReference>
<dbReference type="ExpressionAtlas" id="Q8N4F7">
    <property type="expression patterns" value="baseline and differential"/>
</dbReference>
<dbReference type="GO" id="GO:0005789">
    <property type="term" value="C:endoplasmic reticulum membrane"/>
    <property type="evidence" value="ECO:0000318"/>
    <property type="project" value="GO_Central"/>
</dbReference>
<dbReference type="GO" id="GO:0000139">
    <property type="term" value="C:Golgi membrane"/>
    <property type="evidence" value="ECO:0000318"/>
    <property type="project" value="GO_Central"/>
</dbReference>
<dbReference type="GO" id="GO:0061630">
    <property type="term" value="F:ubiquitin protein ligase activity"/>
    <property type="evidence" value="ECO:0000318"/>
    <property type="project" value="GO_Central"/>
</dbReference>
<dbReference type="GO" id="GO:0008270">
    <property type="term" value="F:zinc ion binding"/>
    <property type="evidence" value="ECO:0007669"/>
    <property type="project" value="UniProtKB-KW"/>
</dbReference>
<dbReference type="GO" id="GO:0036503">
    <property type="term" value="P:ERAD pathway"/>
    <property type="evidence" value="ECO:0000318"/>
    <property type="project" value="GO_Central"/>
</dbReference>
<dbReference type="CDD" id="cd16475">
    <property type="entry name" value="RING-H2_RNF121-like"/>
    <property type="match status" value="1"/>
</dbReference>
<dbReference type="FunFam" id="3.30.40.10:FF:000074">
    <property type="entry name" value="Ring finger protein 121"/>
    <property type="match status" value="1"/>
</dbReference>
<dbReference type="Gene3D" id="3.30.40.10">
    <property type="entry name" value="Zinc/RING finger domain, C3HC4 (zinc finger)"/>
    <property type="match status" value="1"/>
</dbReference>
<dbReference type="InterPro" id="IPR040176">
    <property type="entry name" value="RNF121/RNF175"/>
</dbReference>
<dbReference type="InterPro" id="IPR018957">
    <property type="entry name" value="Znf_C3HC4_RING-type"/>
</dbReference>
<dbReference type="InterPro" id="IPR001841">
    <property type="entry name" value="Znf_RING"/>
</dbReference>
<dbReference type="InterPro" id="IPR013083">
    <property type="entry name" value="Znf_RING/FYVE/PHD"/>
</dbReference>
<dbReference type="PANTHER" id="PTHR13407:SF2">
    <property type="entry name" value="RING FINGER PROTEIN 175"/>
    <property type="match status" value="1"/>
</dbReference>
<dbReference type="PANTHER" id="PTHR13407">
    <property type="entry name" value="RNF121 PROTEIN"/>
    <property type="match status" value="1"/>
</dbReference>
<dbReference type="Pfam" id="PF00097">
    <property type="entry name" value="zf-C3HC4"/>
    <property type="match status" value="1"/>
</dbReference>
<dbReference type="SMART" id="SM00184">
    <property type="entry name" value="RING"/>
    <property type="match status" value="1"/>
</dbReference>
<dbReference type="SUPFAM" id="SSF57850">
    <property type="entry name" value="RING/U-box"/>
    <property type="match status" value="1"/>
</dbReference>
<dbReference type="PROSITE" id="PS50089">
    <property type="entry name" value="ZF_RING_2"/>
    <property type="match status" value="1"/>
</dbReference>
<accession>Q8N4F7</accession>
<accession>C9JL66</accession>
<accession>Q8NB61</accession>
<name>RN175_HUMAN</name>
<sequence>MAAGTAARKAAPVLEAPPQQEQLSHTKLSAEDTWNLQQERMYKMHRGHDSMHVEMILIFLCVLVIAQIVLVQWRQRHGRSYNLVTLLQMWVVPLYFTIKLYWWRFLSMWGMFSVITSYILFRATRKPLSGRTPRLVYKWFLLIYKLSYAFGVVGYLAIMFTMCGFNLFFKIKARDSMDFGIVSLFYGLYYGVMGRDFAEICSDYMASTIGFYSVSRLPTRSLSDNICAVCGQKIIVELDEEGLIENTYQLSCNHVFHEFCIRGWCIVGKKQTCPYCKEKVDLKRMISNPWERTHFLYGQILDWLRYLVAWQPVVIGIVQGIIYSLGLE</sequence>
<organism>
    <name type="scientific">Homo sapiens</name>
    <name type="common">Human</name>
    <dbReference type="NCBI Taxonomy" id="9606"/>
    <lineage>
        <taxon>Eukaryota</taxon>
        <taxon>Metazoa</taxon>
        <taxon>Chordata</taxon>
        <taxon>Craniata</taxon>
        <taxon>Vertebrata</taxon>
        <taxon>Euteleostomi</taxon>
        <taxon>Mammalia</taxon>
        <taxon>Eutheria</taxon>
        <taxon>Euarchontoglires</taxon>
        <taxon>Primates</taxon>
        <taxon>Haplorrhini</taxon>
        <taxon>Catarrhini</taxon>
        <taxon>Hominidae</taxon>
        <taxon>Homo</taxon>
    </lineage>
</organism>
<reference key="1">
    <citation type="journal article" date="2004" name="Nat. Genet.">
        <title>Complete sequencing and characterization of 21,243 full-length human cDNAs.</title>
        <authorList>
            <person name="Ota T."/>
            <person name="Suzuki Y."/>
            <person name="Nishikawa T."/>
            <person name="Otsuki T."/>
            <person name="Sugiyama T."/>
            <person name="Irie R."/>
            <person name="Wakamatsu A."/>
            <person name="Hayashi K."/>
            <person name="Sato H."/>
            <person name="Nagai K."/>
            <person name="Kimura K."/>
            <person name="Makita H."/>
            <person name="Sekine M."/>
            <person name="Obayashi M."/>
            <person name="Nishi T."/>
            <person name="Shibahara T."/>
            <person name="Tanaka T."/>
            <person name="Ishii S."/>
            <person name="Yamamoto J."/>
            <person name="Saito K."/>
            <person name="Kawai Y."/>
            <person name="Isono Y."/>
            <person name="Nakamura Y."/>
            <person name="Nagahari K."/>
            <person name="Murakami K."/>
            <person name="Yasuda T."/>
            <person name="Iwayanagi T."/>
            <person name="Wagatsuma M."/>
            <person name="Shiratori A."/>
            <person name="Sudo H."/>
            <person name="Hosoiri T."/>
            <person name="Kaku Y."/>
            <person name="Kodaira H."/>
            <person name="Kondo H."/>
            <person name="Sugawara M."/>
            <person name="Takahashi M."/>
            <person name="Kanda K."/>
            <person name="Yokoi T."/>
            <person name="Furuya T."/>
            <person name="Kikkawa E."/>
            <person name="Omura Y."/>
            <person name="Abe K."/>
            <person name="Kamihara K."/>
            <person name="Katsuta N."/>
            <person name="Sato K."/>
            <person name="Tanikawa M."/>
            <person name="Yamazaki M."/>
            <person name="Ninomiya K."/>
            <person name="Ishibashi T."/>
            <person name="Yamashita H."/>
            <person name="Murakawa K."/>
            <person name="Fujimori K."/>
            <person name="Tanai H."/>
            <person name="Kimata M."/>
            <person name="Watanabe M."/>
            <person name="Hiraoka S."/>
            <person name="Chiba Y."/>
            <person name="Ishida S."/>
            <person name="Ono Y."/>
            <person name="Takiguchi S."/>
            <person name="Watanabe S."/>
            <person name="Yosida M."/>
            <person name="Hotuta T."/>
            <person name="Kusano J."/>
            <person name="Kanehori K."/>
            <person name="Takahashi-Fujii A."/>
            <person name="Hara H."/>
            <person name="Tanase T.-O."/>
            <person name="Nomura Y."/>
            <person name="Togiya S."/>
            <person name="Komai F."/>
            <person name="Hara R."/>
            <person name="Takeuchi K."/>
            <person name="Arita M."/>
            <person name="Imose N."/>
            <person name="Musashino K."/>
            <person name="Yuuki H."/>
            <person name="Oshima A."/>
            <person name="Sasaki N."/>
            <person name="Aotsuka S."/>
            <person name="Yoshikawa Y."/>
            <person name="Matsunawa H."/>
            <person name="Ichihara T."/>
            <person name="Shiohata N."/>
            <person name="Sano S."/>
            <person name="Moriya S."/>
            <person name="Momiyama H."/>
            <person name="Satoh N."/>
            <person name="Takami S."/>
            <person name="Terashima Y."/>
            <person name="Suzuki O."/>
            <person name="Nakagawa S."/>
            <person name="Senoh A."/>
            <person name="Mizoguchi H."/>
            <person name="Goto Y."/>
            <person name="Shimizu F."/>
            <person name="Wakebe H."/>
            <person name="Hishigaki H."/>
            <person name="Watanabe T."/>
            <person name="Sugiyama A."/>
            <person name="Takemoto M."/>
            <person name="Kawakami B."/>
            <person name="Yamazaki M."/>
            <person name="Watanabe K."/>
            <person name="Kumagai A."/>
            <person name="Itakura S."/>
            <person name="Fukuzumi Y."/>
            <person name="Fujimori Y."/>
            <person name="Komiyama M."/>
            <person name="Tashiro H."/>
            <person name="Tanigami A."/>
            <person name="Fujiwara T."/>
            <person name="Ono T."/>
            <person name="Yamada K."/>
            <person name="Fujii Y."/>
            <person name="Ozaki K."/>
            <person name="Hirao M."/>
            <person name="Ohmori Y."/>
            <person name="Kawabata A."/>
            <person name="Hikiji T."/>
            <person name="Kobatake N."/>
            <person name="Inagaki H."/>
            <person name="Ikema Y."/>
            <person name="Okamoto S."/>
            <person name="Okitani R."/>
            <person name="Kawakami T."/>
            <person name="Noguchi S."/>
            <person name="Itoh T."/>
            <person name="Shigeta K."/>
            <person name="Senba T."/>
            <person name="Matsumura K."/>
            <person name="Nakajima Y."/>
            <person name="Mizuno T."/>
            <person name="Morinaga M."/>
            <person name="Sasaki M."/>
            <person name="Togashi T."/>
            <person name="Oyama M."/>
            <person name="Hata H."/>
            <person name="Watanabe M."/>
            <person name="Komatsu T."/>
            <person name="Mizushima-Sugano J."/>
            <person name="Satoh T."/>
            <person name="Shirai Y."/>
            <person name="Takahashi Y."/>
            <person name="Nakagawa K."/>
            <person name="Okumura K."/>
            <person name="Nagase T."/>
            <person name="Nomura N."/>
            <person name="Kikuchi H."/>
            <person name="Masuho Y."/>
            <person name="Yamashita R."/>
            <person name="Nakai K."/>
            <person name="Yada T."/>
            <person name="Nakamura Y."/>
            <person name="Ohara O."/>
            <person name="Isogai T."/>
            <person name="Sugano S."/>
        </authorList>
    </citation>
    <scope>NUCLEOTIDE SEQUENCE [LARGE SCALE MRNA] (ISOFORM 2)</scope>
    <source>
        <tissue>Brain</tissue>
    </source>
</reference>
<reference key="2">
    <citation type="journal article" date="2005" name="Nature">
        <title>Generation and annotation of the DNA sequences of human chromosomes 2 and 4.</title>
        <authorList>
            <person name="Hillier L.W."/>
            <person name="Graves T.A."/>
            <person name="Fulton R.S."/>
            <person name="Fulton L.A."/>
            <person name="Pepin K.H."/>
            <person name="Minx P."/>
            <person name="Wagner-McPherson C."/>
            <person name="Layman D."/>
            <person name="Wylie K."/>
            <person name="Sekhon M."/>
            <person name="Becker M.C."/>
            <person name="Fewell G.A."/>
            <person name="Delehaunty K.D."/>
            <person name="Miner T.L."/>
            <person name="Nash W.E."/>
            <person name="Kremitzki C."/>
            <person name="Oddy L."/>
            <person name="Du H."/>
            <person name="Sun H."/>
            <person name="Bradshaw-Cordum H."/>
            <person name="Ali J."/>
            <person name="Carter J."/>
            <person name="Cordes M."/>
            <person name="Harris A."/>
            <person name="Isak A."/>
            <person name="van Brunt A."/>
            <person name="Nguyen C."/>
            <person name="Du F."/>
            <person name="Courtney L."/>
            <person name="Kalicki J."/>
            <person name="Ozersky P."/>
            <person name="Abbott S."/>
            <person name="Armstrong J."/>
            <person name="Belter E.A."/>
            <person name="Caruso L."/>
            <person name="Cedroni M."/>
            <person name="Cotton M."/>
            <person name="Davidson T."/>
            <person name="Desai A."/>
            <person name="Elliott G."/>
            <person name="Erb T."/>
            <person name="Fronick C."/>
            <person name="Gaige T."/>
            <person name="Haakenson W."/>
            <person name="Haglund K."/>
            <person name="Holmes A."/>
            <person name="Harkins R."/>
            <person name="Kim K."/>
            <person name="Kruchowski S.S."/>
            <person name="Strong C.M."/>
            <person name="Grewal N."/>
            <person name="Goyea E."/>
            <person name="Hou S."/>
            <person name="Levy A."/>
            <person name="Martinka S."/>
            <person name="Mead K."/>
            <person name="McLellan M.D."/>
            <person name="Meyer R."/>
            <person name="Randall-Maher J."/>
            <person name="Tomlinson C."/>
            <person name="Dauphin-Kohlberg S."/>
            <person name="Kozlowicz-Reilly A."/>
            <person name="Shah N."/>
            <person name="Swearengen-Shahid S."/>
            <person name="Snider J."/>
            <person name="Strong J.T."/>
            <person name="Thompson J."/>
            <person name="Yoakum M."/>
            <person name="Leonard S."/>
            <person name="Pearman C."/>
            <person name="Trani L."/>
            <person name="Radionenko M."/>
            <person name="Waligorski J.E."/>
            <person name="Wang C."/>
            <person name="Rock S.M."/>
            <person name="Tin-Wollam A.-M."/>
            <person name="Maupin R."/>
            <person name="Latreille P."/>
            <person name="Wendl M.C."/>
            <person name="Yang S.-P."/>
            <person name="Pohl C."/>
            <person name="Wallis J.W."/>
            <person name="Spieth J."/>
            <person name="Bieri T.A."/>
            <person name="Berkowicz N."/>
            <person name="Nelson J.O."/>
            <person name="Osborne J."/>
            <person name="Ding L."/>
            <person name="Meyer R."/>
            <person name="Sabo A."/>
            <person name="Shotland Y."/>
            <person name="Sinha P."/>
            <person name="Wohldmann P.E."/>
            <person name="Cook L.L."/>
            <person name="Hickenbotham M.T."/>
            <person name="Eldred J."/>
            <person name="Williams D."/>
            <person name="Jones T.A."/>
            <person name="She X."/>
            <person name="Ciccarelli F.D."/>
            <person name="Izaurralde E."/>
            <person name="Taylor J."/>
            <person name="Schmutz J."/>
            <person name="Myers R.M."/>
            <person name="Cox D.R."/>
            <person name="Huang X."/>
            <person name="McPherson J.D."/>
            <person name="Mardis E.R."/>
            <person name="Clifton S.W."/>
            <person name="Warren W.C."/>
            <person name="Chinwalla A.T."/>
            <person name="Eddy S.R."/>
            <person name="Marra M.A."/>
            <person name="Ovcharenko I."/>
            <person name="Furey T.S."/>
            <person name="Miller W."/>
            <person name="Eichler E.E."/>
            <person name="Bork P."/>
            <person name="Suyama M."/>
            <person name="Torrents D."/>
            <person name="Waterston R.H."/>
            <person name="Wilson R.K."/>
        </authorList>
    </citation>
    <scope>NUCLEOTIDE SEQUENCE [LARGE SCALE GENOMIC DNA]</scope>
</reference>
<reference key="3">
    <citation type="submission" date="2005-09" db="EMBL/GenBank/DDBJ databases">
        <authorList>
            <person name="Mural R.J."/>
            <person name="Istrail S."/>
            <person name="Sutton G."/>
            <person name="Florea L."/>
            <person name="Halpern A.L."/>
            <person name="Mobarry C.M."/>
            <person name="Lippert R."/>
            <person name="Walenz B."/>
            <person name="Shatkay H."/>
            <person name="Dew I."/>
            <person name="Miller J.R."/>
            <person name="Flanigan M.J."/>
            <person name="Edwards N.J."/>
            <person name="Bolanos R."/>
            <person name="Fasulo D."/>
            <person name="Halldorsson B.V."/>
            <person name="Hannenhalli S."/>
            <person name="Turner R."/>
            <person name="Yooseph S."/>
            <person name="Lu F."/>
            <person name="Nusskern D.R."/>
            <person name="Shue B.C."/>
            <person name="Zheng X.H."/>
            <person name="Zhong F."/>
            <person name="Delcher A.L."/>
            <person name="Huson D.H."/>
            <person name="Kravitz S.A."/>
            <person name="Mouchard L."/>
            <person name="Reinert K."/>
            <person name="Remington K.A."/>
            <person name="Clark A.G."/>
            <person name="Waterman M.S."/>
            <person name="Eichler E.E."/>
            <person name="Adams M.D."/>
            <person name="Hunkapiller M.W."/>
            <person name="Myers E.W."/>
            <person name="Venter J.C."/>
        </authorList>
    </citation>
    <scope>NUCLEOTIDE SEQUENCE [LARGE SCALE GENOMIC DNA]</scope>
</reference>
<reference key="4">
    <citation type="journal article" date="2004" name="Genome Res.">
        <title>The status, quality, and expansion of the NIH full-length cDNA project: the Mammalian Gene Collection (MGC).</title>
        <authorList>
            <consortium name="The MGC Project Team"/>
        </authorList>
    </citation>
    <scope>NUCLEOTIDE SEQUENCE [LARGE SCALE MRNA] (ISOFORM 1)</scope>
    <scope>VARIANT ASN-322</scope>
    <source>
        <tissue>Brain</tissue>
    </source>
</reference>
<proteinExistence type="evidence at protein level"/>